<name>T41AA_DANRE</name>
<protein>
    <recommendedName>
        <fullName>Transmembrane protein 41A-A</fullName>
    </recommendedName>
</protein>
<organism>
    <name type="scientific">Danio rerio</name>
    <name type="common">Zebrafish</name>
    <name type="synonym">Brachydanio rerio</name>
    <dbReference type="NCBI Taxonomy" id="7955"/>
    <lineage>
        <taxon>Eukaryota</taxon>
        <taxon>Metazoa</taxon>
        <taxon>Chordata</taxon>
        <taxon>Craniata</taxon>
        <taxon>Vertebrata</taxon>
        <taxon>Euteleostomi</taxon>
        <taxon>Actinopterygii</taxon>
        <taxon>Neopterygii</taxon>
        <taxon>Teleostei</taxon>
        <taxon>Ostariophysi</taxon>
        <taxon>Cypriniformes</taxon>
        <taxon>Danionidae</taxon>
        <taxon>Danioninae</taxon>
        <taxon>Danio</taxon>
    </lineage>
</organism>
<dbReference type="EMBL" id="CR936497">
    <property type="protein sequence ID" value="CAP19439.1"/>
    <property type="molecule type" value="Genomic_DNA"/>
</dbReference>
<dbReference type="EMBL" id="BC095709">
    <property type="protein sequence ID" value="AAH95709.1"/>
    <property type="molecule type" value="mRNA"/>
</dbReference>
<dbReference type="RefSeq" id="NP_001018601.1">
    <property type="nucleotide sequence ID" value="NM_001020765.1"/>
</dbReference>
<dbReference type="FunCoup" id="Q502G2">
    <property type="interactions" value="27"/>
</dbReference>
<dbReference type="STRING" id="7955.ENSDARP00000093207"/>
<dbReference type="PaxDb" id="7955-ENSDARP00000093207"/>
<dbReference type="Ensembl" id="ENSDART00000102430">
    <property type="protein sequence ID" value="ENSDARP00000093207"/>
    <property type="gene ID" value="ENSDARG00000070028"/>
</dbReference>
<dbReference type="GeneID" id="553803"/>
<dbReference type="KEGG" id="dre:553803"/>
<dbReference type="AGR" id="ZFIN:ZDB-GENE-050522-53"/>
<dbReference type="CTD" id="553803"/>
<dbReference type="ZFIN" id="ZDB-GENE-050522-53">
    <property type="gene designation" value="tmem41aa"/>
</dbReference>
<dbReference type="eggNOG" id="KOG3140">
    <property type="taxonomic scope" value="Eukaryota"/>
</dbReference>
<dbReference type="HOGENOM" id="CLU_038944_0_2_1"/>
<dbReference type="InParanoid" id="Q502G2"/>
<dbReference type="OMA" id="DNRDCLF"/>
<dbReference type="OrthoDB" id="3364966at2759"/>
<dbReference type="PhylomeDB" id="Q502G2"/>
<dbReference type="TreeFam" id="TF314301"/>
<dbReference type="PRO" id="PR:Q502G2"/>
<dbReference type="Proteomes" id="UP000000437">
    <property type="component" value="Chromosome 9"/>
</dbReference>
<dbReference type="Bgee" id="ENSDARG00000070028">
    <property type="expression patterns" value="Expressed in mesonephros and 28 other cell types or tissues"/>
</dbReference>
<dbReference type="ExpressionAtlas" id="Q502G2">
    <property type="expression patterns" value="baseline"/>
</dbReference>
<dbReference type="GO" id="GO:0016020">
    <property type="term" value="C:membrane"/>
    <property type="evidence" value="ECO:0007669"/>
    <property type="project" value="UniProtKB-SubCell"/>
</dbReference>
<dbReference type="InterPro" id="IPR045014">
    <property type="entry name" value="TM41A/B"/>
</dbReference>
<dbReference type="InterPro" id="IPR032816">
    <property type="entry name" value="VTT_dom"/>
</dbReference>
<dbReference type="PANTHER" id="PTHR43220">
    <property type="match status" value="1"/>
</dbReference>
<dbReference type="PANTHER" id="PTHR43220:SF21">
    <property type="entry name" value="TRANSMEMBRANE PROTEIN 41A"/>
    <property type="match status" value="1"/>
</dbReference>
<dbReference type="Pfam" id="PF09335">
    <property type="entry name" value="VTT_dom"/>
    <property type="match status" value="1"/>
</dbReference>
<comment type="subcellular location">
    <subcellularLocation>
        <location evidence="3">Membrane</location>
        <topology evidence="3">Multi-pass membrane protein</topology>
    </subcellularLocation>
</comment>
<comment type="similarity">
    <text evidence="3">Belongs to the TMEM41 family.</text>
</comment>
<keyword id="KW-0472">Membrane</keyword>
<keyword id="KW-1185">Reference proteome</keyword>
<keyword id="KW-0732">Signal</keyword>
<keyword id="KW-0812">Transmembrane</keyword>
<keyword id="KW-1133">Transmembrane helix</keyword>
<gene>
    <name type="primary">tmem41aa</name>
    <name type="synonym">tmem41a</name>
    <name type="ORF">si:dkeyp-30d5.3</name>
    <name type="ORF">zgc:112259</name>
</gene>
<accession>Q502G2</accession>
<accession>A9C3W2</accession>
<evidence type="ECO:0000255" key="1"/>
<evidence type="ECO:0000256" key="2">
    <source>
        <dbReference type="SAM" id="MobiDB-lite"/>
    </source>
</evidence>
<evidence type="ECO:0000305" key="3"/>
<sequence length="281" mass="31507">MRSLVGLVAVIVTATFYLYSLSVFLPPGPQLHKQSHEGETTDAKDGDEPSEMETASSRLKFPSDLDELKEMAELLQFYKTEHTGYVLLLFCSAYLYKQAFAIPGSSFLNILAGALFGTWFGLLLTCVLTTVGATLCFLLSQAFGKHHIVKLFPDKVAMLQKKVEENRSSLFFFLLFLRFFPMSPNWFLNMTSPILNIPVTLFFMAVFIGLMPYNFICVQTGSMLSQISSLDDLFSWSVVLKLLLTACVALLPGALIRKYSTRHLHLDGLETNGLSQNKKNR</sequence>
<reference key="1">
    <citation type="journal article" date="2013" name="Nature">
        <title>The zebrafish reference genome sequence and its relationship to the human genome.</title>
        <authorList>
            <person name="Howe K."/>
            <person name="Clark M.D."/>
            <person name="Torroja C.F."/>
            <person name="Torrance J."/>
            <person name="Berthelot C."/>
            <person name="Muffato M."/>
            <person name="Collins J.E."/>
            <person name="Humphray S."/>
            <person name="McLaren K."/>
            <person name="Matthews L."/>
            <person name="McLaren S."/>
            <person name="Sealy I."/>
            <person name="Caccamo M."/>
            <person name="Churcher C."/>
            <person name="Scott C."/>
            <person name="Barrett J.C."/>
            <person name="Koch R."/>
            <person name="Rauch G.J."/>
            <person name="White S."/>
            <person name="Chow W."/>
            <person name="Kilian B."/>
            <person name="Quintais L.T."/>
            <person name="Guerra-Assuncao J.A."/>
            <person name="Zhou Y."/>
            <person name="Gu Y."/>
            <person name="Yen J."/>
            <person name="Vogel J.H."/>
            <person name="Eyre T."/>
            <person name="Redmond S."/>
            <person name="Banerjee R."/>
            <person name="Chi J."/>
            <person name="Fu B."/>
            <person name="Langley E."/>
            <person name="Maguire S.F."/>
            <person name="Laird G.K."/>
            <person name="Lloyd D."/>
            <person name="Kenyon E."/>
            <person name="Donaldson S."/>
            <person name="Sehra H."/>
            <person name="Almeida-King J."/>
            <person name="Loveland J."/>
            <person name="Trevanion S."/>
            <person name="Jones M."/>
            <person name="Quail M."/>
            <person name="Willey D."/>
            <person name="Hunt A."/>
            <person name="Burton J."/>
            <person name="Sims S."/>
            <person name="McLay K."/>
            <person name="Plumb B."/>
            <person name="Davis J."/>
            <person name="Clee C."/>
            <person name="Oliver K."/>
            <person name="Clark R."/>
            <person name="Riddle C."/>
            <person name="Elliot D."/>
            <person name="Threadgold G."/>
            <person name="Harden G."/>
            <person name="Ware D."/>
            <person name="Begum S."/>
            <person name="Mortimore B."/>
            <person name="Kerry G."/>
            <person name="Heath P."/>
            <person name="Phillimore B."/>
            <person name="Tracey A."/>
            <person name="Corby N."/>
            <person name="Dunn M."/>
            <person name="Johnson C."/>
            <person name="Wood J."/>
            <person name="Clark S."/>
            <person name="Pelan S."/>
            <person name="Griffiths G."/>
            <person name="Smith M."/>
            <person name="Glithero R."/>
            <person name="Howden P."/>
            <person name="Barker N."/>
            <person name="Lloyd C."/>
            <person name="Stevens C."/>
            <person name="Harley J."/>
            <person name="Holt K."/>
            <person name="Panagiotidis G."/>
            <person name="Lovell J."/>
            <person name="Beasley H."/>
            <person name="Henderson C."/>
            <person name="Gordon D."/>
            <person name="Auger K."/>
            <person name="Wright D."/>
            <person name="Collins J."/>
            <person name="Raisen C."/>
            <person name="Dyer L."/>
            <person name="Leung K."/>
            <person name="Robertson L."/>
            <person name="Ambridge K."/>
            <person name="Leongamornlert D."/>
            <person name="McGuire S."/>
            <person name="Gilderthorp R."/>
            <person name="Griffiths C."/>
            <person name="Manthravadi D."/>
            <person name="Nichol S."/>
            <person name="Barker G."/>
            <person name="Whitehead S."/>
            <person name="Kay M."/>
            <person name="Brown J."/>
            <person name="Murnane C."/>
            <person name="Gray E."/>
            <person name="Humphries M."/>
            <person name="Sycamore N."/>
            <person name="Barker D."/>
            <person name="Saunders D."/>
            <person name="Wallis J."/>
            <person name="Babbage A."/>
            <person name="Hammond S."/>
            <person name="Mashreghi-Mohammadi M."/>
            <person name="Barr L."/>
            <person name="Martin S."/>
            <person name="Wray P."/>
            <person name="Ellington A."/>
            <person name="Matthews N."/>
            <person name="Ellwood M."/>
            <person name="Woodmansey R."/>
            <person name="Clark G."/>
            <person name="Cooper J."/>
            <person name="Tromans A."/>
            <person name="Grafham D."/>
            <person name="Skuce C."/>
            <person name="Pandian R."/>
            <person name="Andrews R."/>
            <person name="Harrison E."/>
            <person name="Kimberley A."/>
            <person name="Garnett J."/>
            <person name="Fosker N."/>
            <person name="Hall R."/>
            <person name="Garner P."/>
            <person name="Kelly D."/>
            <person name="Bird C."/>
            <person name="Palmer S."/>
            <person name="Gehring I."/>
            <person name="Berger A."/>
            <person name="Dooley C.M."/>
            <person name="Ersan-Urun Z."/>
            <person name="Eser C."/>
            <person name="Geiger H."/>
            <person name="Geisler M."/>
            <person name="Karotki L."/>
            <person name="Kirn A."/>
            <person name="Konantz J."/>
            <person name="Konantz M."/>
            <person name="Oberlander M."/>
            <person name="Rudolph-Geiger S."/>
            <person name="Teucke M."/>
            <person name="Lanz C."/>
            <person name="Raddatz G."/>
            <person name="Osoegawa K."/>
            <person name="Zhu B."/>
            <person name="Rapp A."/>
            <person name="Widaa S."/>
            <person name="Langford C."/>
            <person name="Yang F."/>
            <person name="Schuster S.C."/>
            <person name="Carter N.P."/>
            <person name="Harrow J."/>
            <person name="Ning Z."/>
            <person name="Herrero J."/>
            <person name="Searle S.M."/>
            <person name="Enright A."/>
            <person name="Geisler R."/>
            <person name="Plasterk R.H."/>
            <person name="Lee C."/>
            <person name="Westerfield M."/>
            <person name="de Jong P.J."/>
            <person name="Zon L.I."/>
            <person name="Postlethwait J.H."/>
            <person name="Nusslein-Volhard C."/>
            <person name="Hubbard T.J."/>
            <person name="Roest Crollius H."/>
            <person name="Rogers J."/>
            <person name="Stemple D.L."/>
        </authorList>
    </citation>
    <scope>NUCLEOTIDE SEQUENCE [LARGE SCALE GENOMIC DNA]</scope>
    <source>
        <strain>Tuebingen</strain>
    </source>
</reference>
<reference key="2">
    <citation type="submission" date="2005-05" db="EMBL/GenBank/DDBJ databases">
        <authorList>
            <consortium name="NIH - Zebrafish Gene Collection (ZGC) project"/>
        </authorList>
    </citation>
    <scope>NUCLEOTIDE SEQUENCE [LARGE SCALE MRNA]</scope>
    <source>
        <tissue>Ovary</tissue>
    </source>
</reference>
<proteinExistence type="evidence at transcript level"/>
<feature type="signal peptide" evidence="1">
    <location>
        <begin position="1"/>
        <end position="22"/>
    </location>
</feature>
<feature type="chain" id="PRO_0000291936" description="Transmembrane protein 41A-A">
    <location>
        <begin position="23"/>
        <end position="281"/>
    </location>
</feature>
<feature type="transmembrane region" description="Helical" evidence="1">
    <location>
        <begin position="84"/>
        <end position="104"/>
    </location>
</feature>
<feature type="transmembrane region" description="Helical" evidence="1">
    <location>
        <begin position="107"/>
        <end position="127"/>
    </location>
</feature>
<feature type="transmembrane region" description="Helical" evidence="1">
    <location>
        <begin position="170"/>
        <end position="190"/>
    </location>
</feature>
<feature type="transmembrane region" description="Helical" evidence="1">
    <location>
        <begin position="197"/>
        <end position="217"/>
    </location>
</feature>
<feature type="transmembrane region" description="Helical" evidence="1">
    <location>
        <begin position="236"/>
        <end position="256"/>
    </location>
</feature>
<feature type="region of interest" description="Disordered" evidence="2">
    <location>
        <begin position="32"/>
        <end position="56"/>
    </location>
</feature>
<feature type="compositionally biased region" description="Basic and acidic residues" evidence="2">
    <location>
        <begin position="34"/>
        <end position="47"/>
    </location>
</feature>